<reference key="1">
    <citation type="submission" date="2008-01" db="EMBL/GenBank/DDBJ databases">
        <title>Complete sequence of Pseudomonas putida GB-1.</title>
        <authorList>
            <consortium name="US DOE Joint Genome Institute"/>
            <person name="Copeland A."/>
            <person name="Lucas S."/>
            <person name="Lapidus A."/>
            <person name="Barry K."/>
            <person name="Glavina del Rio T."/>
            <person name="Dalin E."/>
            <person name="Tice H."/>
            <person name="Pitluck S."/>
            <person name="Bruce D."/>
            <person name="Goodwin L."/>
            <person name="Chertkov O."/>
            <person name="Brettin T."/>
            <person name="Detter J.C."/>
            <person name="Han C."/>
            <person name="Kuske C.R."/>
            <person name="Schmutz J."/>
            <person name="Larimer F."/>
            <person name="Land M."/>
            <person name="Hauser L."/>
            <person name="Kyrpides N."/>
            <person name="Kim E."/>
            <person name="McCarthy J.K."/>
            <person name="Richardson P."/>
        </authorList>
    </citation>
    <scope>NUCLEOTIDE SEQUENCE [LARGE SCALE GENOMIC DNA]</scope>
    <source>
        <strain>GB-1</strain>
    </source>
</reference>
<keyword id="KW-0030">Aminoacyl-tRNA synthetase</keyword>
<keyword id="KW-0067">ATP-binding</keyword>
<keyword id="KW-0436">Ligase</keyword>
<keyword id="KW-0479">Metal-binding</keyword>
<keyword id="KW-0547">Nucleotide-binding</keyword>
<keyword id="KW-0862">Zinc</keyword>
<gene>
    <name evidence="1" type="primary">gluQ</name>
    <name type="ordered locus">PputGB1_4692</name>
</gene>
<evidence type="ECO:0000255" key="1">
    <source>
        <dbReference type="HAMAP-Rule" id="MF_01428"/>
    </source>
</evidence>
<protein>
    <recommendedName>
        <fullName evidence="1">Glutamyl-Q tRNA(Asp) synthetase</fullName>
        <shortName evidence="1">Glu-Q-RSs</shortName>
        <ecNumber evidence="1">6.1.1.-</ecNumber>
    </recommendedName>
</protein>
<accession>B0KHV8</accession>
<comment type="function">
    <text evidence="1">Catalyzes the tRNA-independent activation of glutamate in presence of ATP and the subsequent transfer of glutamate onto a tRNA(Asp). Glutamate is transferred on the 2-amino-5-(4,5-dihydroxy-2-cyclopenten-1-yl) moiety of the queuosine in the wobble position of the QUC anticodon.</text>
</comment>
<comment type="cofactor">
    <cofactor evidence="1">
        <name>Zn(2+)</name>
        <dbReference type="ChEBI" id="CHEBI:29105"/>
    </cofactor>
    <text evidence="1">Binds 1 zinc ion per subunit.</text>
</comment>
<comment type="similarity">
    <text evidence="1">Belongs to the class-I aminoacyl-tRNA synthetase family. GluQ subfamily.</text>
</comment>
<organism>
    <name type="scientific">Pseudomonas putida (strain GB-1)</name>
    <dbReference type="NCBI Taxonomy" id="76869"/>
    <lineage>
        <taxon>Bacteria</taxon>
        <taxon>Pseudomonadati</taxon>
        <taxon>Pseudomonadota</taxon>
        <taxon>Gammaproteobacteria</taxon>
        <taxon>Pseudomonadales</taxon>
        <taxon>Pseudomonadaceae</taxon>
        <taxon>Pseudomonas</taxon>
    </lineage>
</organism>
<sequence length="295" mass="33175">MTNSSYIGRFAPTPSGFLHFGSLVAALASWLDARAVNGRWLLRMEDTDPPREMPGARDAILQTLERYGLEWDGEVVFQSQRHDAYAAVVDRLFNMGLAYACICSRKQLEGYNGIYPGLCRNAGHAREGAAIRLRVPELIYRFTDRVQGEYQQHLGREVGDFVIQRRDGLYAYQLAVVLDDAWQGVTDIVRGADLLDNTPRQLYLQELLGFSQPRYLHIPLIVQPDGHKLGKSYRSPPLQVEHATPLLLRALRALGQDTDPELLVATPAEVLAVARKQWRPEAIAQKTTVPEADLR</sequence>
<name>GLUQ_PSEPG</name>
<feature type="chain" id="PRO_1000145746" description="Glutamyl-Q tRNA(Asp) synthetase">
    <location>
        <begin position="1"/>
        <end position="295"/>
    </location>
</feature>
<feature type="short sequence motif" description="'HIGH' region">
    <location>
        <begin position="12"/>
        <end position="22"/>
    </location>
</feature>
<feature type="short sequence motif" description="'KMSKS' region">
    <location>
        <begin position="228"/>
        <end position="232"/>
    </location>
</feature>
<feature type="binding site" evidence="1">
    <location>
        <begin position="9"/>
        <end position="13"/>
    </location>
    <ligand>
        <name>L-glutamate</name>
        <dbReference type="ChEBI" id="CHEBI:29985"/>
    </ligand>
</feature>
<feature type="binding site" evidence="1">
    <location>
        <position position="45"/>
    </location>
    <ligand>
        <name>L-glutamate</name>
        <dbReference type="ChEBI" id="CHEBI:29985"/>
    </ligand>
</feature>
<feature type="binding site" evidence="1">
    <location>
        <position position="101"/>
    </location>
    <ligand>
        <name>Zn(2+)</name>
        <dbReference type="ChEBI" id="CHEBI:29105"/>
    </ligand>
</feature>
<feature type="binding site" evidence="1">
    <location>
        <position position="103"/>
    </location>
    <ligand>
        <name>Zn(2+)</name>
        <dbReference type="ChEBI" id="CHEBI:29105"/>
    </ligand>
</feature>
<feature type="binding site" evidence="1">
    <location>
        <position position="115"/>
    </location>
    <ligand>
        <name>Zn(2+)</name>
        <dbReference type="ChEBI" id="CHEBI:29105"/>
    </ligand>
</feature>
<feature type="binding site" evidence="1">
    <location>
        <position position="119"/>
    </location>
    <ligand>
        <name>Zn(2+)</name>
        <dbReference type="ChEBI" id="CHEBI:29105"/>
    </ligand>
</feature>
<feature type="binding site" evidence="1">
    <location>
        <position position="172"/>
    </location>
    <ligand>
        <name>L-glutamate</name>
        <dbReference type="ChEBI" id="CHEBI:29985"/>
    </ligand>
</feature>
<feature type="binding site" evidence="1">
    <location>
        <position position="190"/>
    </location>
    <ligand>
        <name>L-glutamate</name>
        <dbReference type="ChEBI" id="CHEBI:29985"/>
    </ligand>
</feature>
<feature type="binding site" evidence="1">
    <location>
        <position position="231"/>
    </location>
    <ligand>
        <name>ATP</name>
        <dbReference type="ChEBI" id="CHEBI:30616"/>
    </ligand>
</feature>
<dbReference type="EC" id="6.1.1.-" evidence="1"/>
<dbReference type="EMBL" id="CP000926">
    <property type="protein sequence ID" value="ABZ00579.1"/>
    <property type="molecule type" value="Genomic_DNA"/>
</dbReference>
<dbReference type="SMR" id="B0KHV8"/>
<dbReference type="KEGG" id="ppg:PputGB1_4692"/>
<dbReference type="eggNOG" id="COG0008">
    <property type="taxonomic scope" value="Bacteria"/>
</dbReference>
<dbReference type="HOGENOM" id="CLU_015768_0_1_6"/>
<dbReference type="Proteomes" id="UP000002157">
    <property type="component" value="Chromosome"/>
</dbReference>
<dbReference type="GO" id="GO:0005829">
    <property type="term" value="C:cytosol"/>
    <property type="evidence" value="ECO:0007669"/>
    <property type="project" value="TreeGrafter"/>
</dbReference>
<dbReference type="GO" id="GO:0005524">
    <property type="term" value="F:ATP binding"/>
    <property type="evidence" value="ECO:0007669"/>
    <property type="project" value="UniProtKB-KW"/>
</dbReference>
<dbReference type="GO" id="GO:0004818">
    <property type="term" value="F:glutamate-tRNA ligase activity"/>
    <property type="evidence" value="ECO:0007669"/>
    <property type="project" value="TreeGrafter"/>
</dbReference>
<dbReference type="GO" id="GO:0008270">
    <property type="term" value="F:zinc ion binding"/>
    <property type="evidence" value="ECO:0007669"/>
    <property type="project" value="UniProtKB-UniRule"/>
</dbReference>
<dbReference type="GO" id="GO:0006424">
    <property type="term" value="P:glutamyl-tRNA aminoacylation"/>
    <property type="evidence" value="ECO:0007669"/>
    <property type="project" value="InterPro"/>
</dbReference>
<dbReference type="GO" id="GO:0006400">
    <property type="term" value="P:tRNA modification"/>
    <property type="evidence" value="ECO:0007669"/>
    <property type="project" value="InterPro"/>
</dbReference>
<dbReference type="FunFam" id="3.40.50.620:FF:000093">
    <property type="entry name" value="Glutamyl-Q tRNA(Asp) synthetase"/>
    <property type="match status" value="1"/>
</dbReference>
<dbReference type="Gene3D" id="3.90.800.10">
    <property type="entry name" value="Glutamyl-tRNA Synthetase, Domain 3"/>
    <property type="match status" value="1"/>
</dbReference>
<dbReference type="Gene3D" id="3.40.50.620">
    <property type="entry name" value="HUPs"/>
    <property type="match status" value="1"/>
</dbReference>
<dbReference type="HAMAP" id="MF_01428">
    <property type="entry name" value="Glu_Q_tRNA_synth"/>
    <property type="match status" value="1"/>
</dbReference>
<dbReference type="InterPro" id="IPR022380">
    <property type="entry name" value="Glu-Q_tRNA(Asp)_Synthase"/>
</dbReference>
<dbReference type="InterPro" id="IPR000924">
    <property type="entry name" value="Glu/Gln-tRNA-synth"/>
</dbReference>
<dbReference type="InterPro" id="IPR020058">
    <property type="entry name" value="Glu/Gln-tRNA-synth_Ib_cat-dom"/>
</dbReference>
<dbReference type="InterPro" id="IPR049940">
    <property type="entry name" value="GluQ/Sye"/>
</dbReference>
<dbReference type="InterPro" id="IPR014729">
    <property type="entry name" value="Rossmann-like_a/b/a_fold"/>
</dbReference>
<dbReference type="NCBIfam" id="NF004314">
    <property type="entry name" value="PRK05710.1-3"/>
    <property type="match status" value="1"/>
</dbReference>
<dbReference type="NCBIfam" id="TIGR03838">
    <property type="entry name" value="queuosine_YadB"/>
    <property type="match status" value="1"/>
</dbReference>
<dbReference type="PANTHER" id="PTHR43311">
    <property type="entry name" value="GLUTAMATE--TRNA LIGASE"/>
    <property type="match status" value="1"/>
</dbReference>
<dbReference type="PANTHER" id="PTHR43311:SF1">
    <property type="entry name" value="GLUTAMYL-Q TRNA(ASP) SYNTHETASE"/>
    <property type="match status" value="1"/>
</dbReference>
<dbReference type="Pfam" id="PF00749">
    <property type="entry name" value="tRNA-synt_1c"/>
    <property type="match status" value="1"/>
</dbReference>
<dbReference type="PRINTS" id="PR00987">
    <property type="entry name" value="TRNASYNTHGLU"/>
</dbReference>
<dbReference type="SUPFAM" id="SSF52374">
    <property type="entry name" value="Nucleotidylyl transferase"/>
    <property type="match status" value="1"/>
</dbReference>
<proteinExistence type="inferred from homology"/>